<accession>O08641</accession>
<accession>Q6P7V3</accession>
<accession>Q6PDR3</accession>
<organism>
    <name type="scientific">Mus musculus</name>
    <name type="common">Mouse</name>
    <dbReference type="NCBI Taxonomy" id="10090"/>
    <lineage>
        <taxon>Eukaryota</taxon>
        <taxon>Metazoa</taxon>
        <taxon>Chordata</taxon>
        <taxon>Craniata</taxon>
        <taxon>Vertebrata</taxon>
        <taxon>Euteleostomi</taxon>
        <taxon>Mammalia</taxon>
        <taxon>Eutheria</taxon>
        <taxon>Euarchontoglires</taxon>
        <taxon>Glires</taxon>
        <taxon>Rodentia</taxon>
        <taxon>Myomorpha</taxon>
        <taxon>Muroidea</taxon>
        <taxon>Muridae</taxon>
        <taxon>Murinae</taxon>
        <taxon>Mus</taxon>
        <taxon>Mus</taxon>
    </lineage>
</organism>
<dbReference type="EMBL" id="D85926">
    <property type="protein sequence ID" value="BAA19679.1"/>
    <property type="molecule type" value="mRNA"/>
</dbReference>
<dbReference type="EMBL" id="AK141199">
    <property type="protein sequence ID" value="BAE24582.1"/>
    <property type="molecule type" value="mRNA"/>
</dbReference>
<dbReference type="EMBL" id="BC010296">
    <property type="protein sequence ID" value="AAH10296.1"/>
    <property type="molecule type" value="mRNA"/>
</dbReference>
<dbReference type="EMBL" id="BC058557">
    <property type="protein sequence ID" value="AAH58557.1"/>
    <property type="molecule type" value="mRNA"/>
</dbReference>
<dbReference type="EMBL" id="BC061488">
    <property type="protein sequence ID" value="AAH61488.1"/>
    <property type="molecule type" value="mRNA"/>
</dbReference>
<dbReference type="EMBL" id="BC110043">
    <property type="protein sequence ID" value="AAI10044.1"/>
    <property type="molecule type" value="mRNA"/>
</dbReference>
<dbReference type="CCDS" id="CCDS25859.1">
    <molecule id="O08641-1"/>
</dbReference>
<dbReference type="CCDS" id="CCDS79110.1">
    <molecule id="O08641-2"/>
</dbReference>
<dbReference type="RefSeq" id="NP_001276409.1">
    <molecule id="O08641-2"/>
    <property type="nucleotide sequence ID" value="NM_001289480.1"/>
</dbReference>
<dbReference type="RefSeq" id="NP_038737.1">
    <molecule id="O08641-1"/>
    <property type="nucleotide sequence ID" value="NM_013709.5"/>
</dbReference>
<dbReference type="SMR" id="O08641"/>
<dbReference type="FunCoup" id="O08641">
    <property type="interactions" value="18"/>
</dbReference>
<dbReference type="IntAct" id="O08641">
    <property type="interactions" value="2"/>
</dbReference>
<dbReference type="STRING" id="10090.ENSMUSP00000020997"/>
<dbReference type="PhosphoSitePlus" id="O08641"/>
<dbReference type="PaxDb" id="10090-ENSMUSP00000020997"/>
<dbReference type="PeptideAtlas" id="O08641"/>
<dbReference type="ProteomicsDB" id="257146">
    <molecule id="O08641-1"/>
</dbReference>
<dbReference type="ProteomicsDB" id="257147">
    <molecule id="O08641-2"/>
</dbReference>
<dbReference type="ProteomicsDB" id="257148">
    <molecule id="O08641-3"/>
</dbReference>
<dbReference type="Antibodypedia" id="49866">
    <property type="antibodies" value="36 antibodies from 13 providers"/>
</dbReference>
<dbReference type="DNASU" id="24057"/>
<dbReference type="Ensembl" id="ENSMUST00000020997.15">
    <molecule id="O08641-1"/>
    <property type="protein sequence ID" value="ENSMUSP00000020997.9"/>
    <property type="gene ID" value="ENSMUSG00000020669.16"/>
</dbReference>
<dbReference type="Ensembl" id="ENSMUST00000110880.3">
    <molecule id="O08641-2"/>
    <property type="protein sequence ID" value="ENSMUSP00000106504.3"/>
    <property type="gene ID" value="ENSMUSG00000020669.16"/>
</dbReference>
<dbReference type="GeneID" id="24057"/>
<dbReference type="KEGG" id="mmu:24057"/>
<dbReference type="UCSC" id="uc007ngz.2">
    <molecule id="O08641-1"/>
    <property type="organism name" value="mouse"/>
</dbReference>
<dbReference type="UCSC" id="uc011ylg.2">
    <molecule id="O08641-2"/>
    <property type="organism name" value="mouse"/>
</dbReference>
<dbReference type="AGR" id="MGI:1346118"/>
<dbReference type="CTD" id="26751"/>
<dbReference type="MGI" id="MGI:1346118">
    <property type="gene designation" value="Sh3yl1"/>
</dbReference>
<dbReference type="VEuPathDB" id="HostDB:ENSMUSG00000020669"/>
<dbReference type="eggNOG" id="KOG1843">
    <property type="taxonomic scope" value="Eukaryota"/>
</dbReference>
<dbReference type="GeneTree" id="ENSGT00510000048137"/>
<dbReference type="HOGENOM" id="CLU_015320_2_1_1"/>
<dbReference type="InParanoid" id="O08641"/>
<dbReference type="OMA" id="SNCKARN"/>
<dbReference type="OrthoDB" id="35017at9989"/>
<dbReference type="PhylomeDB" id="O08641"/>
<dbReference type="TreeFam" id="TF331022"/>
<dbReference type="BioGRID-ORCS" id="24057">
    <property type="hits" value="3 hits in 76 CRISPR screens"/>
</dbReference>
<dbReference type="ChiTaRS" id="Sh3yl1">
    <property type="organism name" value="mouse"/>
</dbReference>
<dbReference type="PRO" id="PR:O08641"/>
<dbReference type="Proteomes" id="UP000000589">
    <property type="component" value="Chromosome 12"/>
</dbReference>
<dbReference type="RNAct" id="O08641">
    <property type="molecule type" value="protein"/>
</dbReference>
<dbReference type="Bgee" id="ENSMUSG00000020669">
    <property type="expression patterns" value="Expressed in seminal vesicle and 230 other cell types or tissues"/>
</dbReference>
<dbReference type="GO" id="GO:0032587">
    <property type="term" value="C:ruffle membrane"/>
    <property type="evidence" value="ECO:0000266"/>
    <property type="project" value="MGI"/>
</dbReference>
<dbReference type="GO" id="GO:0019902">
    <property type="term" value="F:phosphatase binding"/>
    <property type="evidence" value="ECO:0000266"/>
    <property type="project" value="MGI"/>
</dbReference>
<dbReference type="GO" id="GO:0035091">
    <property type="term" value="F:phosphatidylinositol binding"/>
    <property type="evidence" value="ECO:0000266"/>
    <property type="project" value="MGI"/>
</dbReference>
<dbReference type="GO" id="GO:0006661">
    <property type="term" value="P:phosphatidylinositol biosynthetic process"/>
    <property type="evidence" value="ECO:0000315"/>
    <property type="project" value="MGI"/>
</dbReference>
<dbReference type="GO" id="GO:1900027">
    <property type="term" value="P:regulation of ruffle assembly"/>
    <property type="evidence" value="ECO:0000315"/>
    <property type="project" value="MGI"/>
</dbReference>
<dbReference type="CDD" id="cd11841">
    <property type="entry name" value="SH3_SH3YL1_like"/>
    <property type="match status" value="1"/>
</dbReference>
<dbReference type="CDD" id="cd11525">
    <property type="entry name" value="SYLF_SH3YL1_like"/>
    <property type="match status" value="1"/>
</dbReference>
<dbReference type="FunFam" id="2.30.30.40:FF:000100">
    <property type="entry name" value="SH3 domain-containing YSC84-like protein 1"/>
    <property type="match status" value="1"/>
</dbReference>
<dbReference type="Gene3D" id="2.30.30.40">
    <property type="entry name" value="SH3 Domains"/>
    <property type="match status" value="1"/>
</dbReference>
<dbReference type="InterPro" id="IPR036028">
    <property type="entry name" value="SH3-like_dom_sf"/>
</dbReference>
<dbReference type="InterPro" id="IPR001452">
    <property type="entry name" value="SH3_domain"/>
</dbReference>
<dbReference type="InterPro" id="IPR051702">
    <property type="entry name" value="SH3_domain_YSC84-like"/>
</dbReference>
<dbReference type="InterPro" id="IPR035511">
    <property type="entry name" value="SH3YL1_SH3"/>
</dbReference>
<dbReference type="InterPro" id="IPR033643">
    <property type="entry name" value="SYLF_SH3YL1-like"/>
</dbReference>
<dbReference type="InterPro" id="IPR007461">
    <property type="entry name" value="Ysc84_actin-binding"/>
</dbReference>
<dbReference type="PANTHER" id="PTHR15629:SF2">
    <property type="entry name" value="SH3 DOMAIN-CONTAINING YSC84-LIKE PROTEIN 1"/>
    <property type="match status" value="1"/>
</dbReference>
<dbReference type="PANTHER" id="PTHR15629">
    <property type="entry name" value="SH3YL1 PROTEIN"/>
    <property type="match status" value="1"/>
</dbReference>
<dbReference type="Pfam" id="PF14604">
    <property type="entry name" value="SH3_9"/>
    <property type="match status" value="1"/>
</dbReference>
<dbReference type="Pfam" id="PF04366">
    <property type="entry name" value="Ysc84"/>
    <property type="match status" value="1"/>
</dbReference>
<dbReference type="PRINTS" id="PR00452">
    <property type="entry name" value="SH3DOMAIN"/>
</dbReference>
<dbReference type="SMART" id="SM00326">
    <property type="entry name" value="SH3"/>
    <property type="match status" value="1"/>
</dbReference>
<dbReference type="SUPFAM" id="SSF50044">
    <property type="entry name" value="SH3-domain"/>
    <property type="match status" value="1"/>
</dbReference>
<dbReference type="PROSITE" id="PS50002">
    <property type="entry name" value="SH3"/>
    <property type="match status" value="1"/>
</dbReference>
<comment type="subunit">
    <text evidence="4">Interacts with SH3D19.</text>
</comment>
<comment type="interaction">
    <interactant intactId="EBI-2024519">
        <id>O08641</id>
    </interactant>
    <interactant intactId="EBI-2024543">
        <id>Q91X43</id>
        <label>Sh3d19</label>
    </interactant>
    <organismsDiffer>false</organismsDiffer>
    <experiments>3</experiments>
</comment>
<comment type="alternative products">
    <event type="alternative splicing"/>
    <isoform>
        <id>O08641-1</id>
        <name>1</name>
        <sequence type="displayed"/>
    </isoform>
    <isoform>
        <id>O08641-2</id>
        <name>2</name>
        <sequence type="described" ref="VSP_034336"/>
    </isoform>
    <isoform>
        <id>O08641-3</id>
        <name>3</name>
        <sequence type="described" ref="VSP_034337"/>
    </isoform>
</comment>
<comment type="tissue specificity">
    <text evidence="3">Expressed in skin, kidney, stomach, small intestine and colon. Highly expressed in the anagen hair follicle. In hair, it is expressed predominantly in the hair bulb, the hair shaft, inner root sheath, and outer root sheath in the lower half of the follicle.</text>
</comment>
<comment type="developmental stage">
    <text evidence="3">In skin, expression follows hair-growth cycle, increasing significantly during mid and late anagen phases, and decreases during catagen, telogen and early anagen phases.</text>
</comment>
<comment type="similarity">
    <text evidence="6">Belongs to the SH3YL1 family.</text>
</comment>
<name>SH3Y1_MOUSE</name>
<proteinExistence type="evidence at protein level"/>
<reference key="1">
    <citation type="journal article" date="2000" name="J. Invest. Dermatol.">
        <title>A novel mouse gene, Sh3yl1, is expressed in the anagen hair follicle.</title>
        <authorList>
            <person name="Aoki N."/>
            <person name="Ito K."/>
            <person name="Ito M."/>
        </authorList>
    </citation>
    <scope>NUCLEOTIDE SEQUENCE [MRNA] (ISOFORM 1)</scope>
    <scope>TISSUE SPECIFICITY</scope>
    <scope>DEVELOPMENTAL STAGE</scope>
    <source>
        <strain>C57BL/6J</strain>
        <tissue>Skin</tissue>
    </source>
</reference>
<reference key="2">
    <citation type="journal article" date="2005" name="Science">
        <title>The transcriptional landscape of the mammalian genome.</title>
        <authorList>
            <person name="Carninci P."/>
            <person name="Kasukawa T."/>
            <person name="Katayama S."/>
            <person name="Gough J."/>
            <person name="Frith M.C."/>
            <person name="Maeda N."/>
            <person name="Oyama R."/>
            <person name="Ravasi T."/>
            <person name="Lenhard B."/>
            <person name="Wells C."/>
            <person name="Kodzius R."/>
            <person name="Shimokawa K."/>
            <person name="Bajic V.B."/>
            <person name="Brenner S.E."/>
            <person name="Batalov S."/>
            <person name="Forrest A.R."/>
            <person name="Zavolan M."/>
            <person name="Davis M.J."/>
            <person name="Wilming L.G."/>
            <person name="Aidinis V."/>
            <person name="Allen J.E."/>
            <person name="Ambesi-Impiombato A."/>
            <person name="Apweiler R."/>
            <person name="Aturaliya R.N."/>
            <person name="Bailey T.L."/>
            <person name="Bansal M."/>
            <person name="Baxter L."/>
            <person name="Beisel K.W."/>
            <person name="Bersano T."/>
            <person name="Bono H."/>
            <person name="Chalk A.M."/>
            <person name="Chiu K.P."/>
            <person name="Choudhary V."/>
            <person name="Christoffels A."/>
            <person name="Clutterbuck D.R."/>
            <person name="Crowe M.L."/>
            <person name="Dalla E."/>
            <person name="Dalrymple B.P."/>
            <person name="de Bono B."/>
            <person name="Della Gatta G."/>
            <person name="di Bernardo D."/>
            <person name="Down T."/>
            <person name="Engstrom P."/>
            <person name="Fagiolini M."/>
            <person name="Faulkner G."/>
            <person name="Fletcher C.F."/>
            <person name="Fukushima T."/>
            <person name="Furuno M."/>
            <person name="Futaki S."/>
            <person name="Gariboldi M."/>
            <person name="Georgii-Hemming P."/>
            <person name="Gingeras T.R."/>
            <person name="Gojobori T."/>
            <person name="Green R.E."/>
            <person name="Gustincich S."/>
            <person name="Harbers M."/>
            <person name="Hayashi Y."/>
            <person name="Hensch T.K."/>
            <person name="Hirokawa N."/>
            <person name="Hill D."/>
            <person name="Huminiecki L."/>
            <person name="Iacono M."/>
            <person name="Ikeo K."/>
            <person name="Iwama A."/>
            <person name="Ishikawa T."/>
            <person name="Jakt M."/>
            <person name="Kanapin A."/>
            <person name="Katoh M."/>
            <person name="Kawasawa Y."/>
            <person name="Kelso J."/>
            <person name="Kitamura H."/>
            <person name="Kitano H."/>
            <person name="Kollias G."/>
            <person name="Krishnan S.P."/>
            <person name="Kruger A."/>
            <person name="Kummerfeld S.K."/>
            <person name="Kurochkin I.V."/>
            <person name="Lareau L.F."/>
            <person name="Lazarevic D."/>
            <person name="Lipovich L."/>
            <person name="Liu J."/>
            <person name="Liuni S."/>
            <person name="McWilliam S."/>
            <person name="Madan Babu M."/>
            <person name="Madera M."/>
            <person name="Marchionni L."/>
            <person name="Matsuda H."/>
            <person name="Matsuzawa S."/>
            <person name="Miki H."/>
            <person name="Mignone F."/>
            <person name="Miyake S."/>
            <person name="Morris K."/>
            <person name="Mottagui-Tabar S."/>
            <person name="Mulder N."/>
            <person name="Nakano N."/>
            <person name="Nakauchi H."/>
            <person name="Ng P."/>
            <person name="Nilsson R."/>
            <person name="Nishiguchi S."/>
            <person name="Nishikawa S."/>
            <person name="Nori F."/>
            <person name="Ohara O."/>
            <person name="Okazaki Y."/>
            <person name="Orlando V."/>
            <person name="Pang K.C."/>
            <person name="Pavan W.J."/>
            <person name="Pavesi G."/>
            <person name="Pesole G."/>
            <person name="Petrovsky N."/>
            <person name="Piazza S."/>
            <person name="Reed J."/>
            <person name="Reid J.F."/>
            <person name="Ring B.Z."/>
            <person name="Ringwald M."/>
            <person name="Rost B."/>
            <person name="Ruan Y."/>
            <person name="Salzberg S.L."/>
            <person name="Sandelin A."/>
            <person name="Schneider C."/>
            <person name="Schoenbach C."/>
            <person name="Sekiguchi K."/>
            <person name="Semple C.A."/>
            <person name="Seno S."/>
            <person name="Sessa L."/>
            <person name="Sheng Y."/>
            <person name="Shibata Y."/>
            <person name="Shimada H."/>
            <person name="Shimada K."/>
            <person name="Silva D."/>
            <person name="Sinclair B."/>
            <person name="Sperling S."/>
            <person name="Stupka E."/>
            <person name="Sugiura K."/>
            <person name="Sultana R."/>
            <person name="Takenaka Y."/>
            <person name="Taki K."/>
            <person name="Tammoja K."/>
            <person name="Tan S.L."/>
            <person name="Tang S."/>
            <person name="Taylor M.S."/>
            <person name="Tegner J."/>
            <person name="Teichmann S.A."/>
            <person name="Ueda H.R."/>
            <person name="van Nimwegen E."/>
            <person name="Verardo R."/>
            <person name="Wei C.L."/>
            <person name="Yagi K."/>
            <person name="Yamanishi H."/>
            <person name="Zabarovsky E."/>
            <person name="Zhu S."/>
            <person name="Zimmer A."/>
            <person name="Hide W."/>
            <person name="Bult C."/>
            <person name="Grimmond S.M."/>
            <person name="Teasdale R.D."/>
            <person name="Liu E.T."/>
            <person name="Brusic V."/>
            <person name="Quackenbush J."/>
            <person name="Wahlestedt C."/>
            <person name="Mattick J.S."/>
            <person name="Hume D.A."/>
            <person name="Kai C."/>
            <person name="Sasaki D."/>
            <person name="Tomaru Y."/>
            <person name="Fukuda S."/>
            <person name="Kanamori-Katayama M."/>
            <person name="Suzuki M."/>
            <person name="Aoki J."/>
            <person name="Arakawa T."/>
            <person name="Iida J."/>
            <person name="Imamura K."/>
            <person name="Itoh M."/>
            <person name="Kato T."/>
            <person name="Kawaji H."/>
            <person name="Kawagashira N."/>
            <person name="Kawashima T."/>
            <person name="Kojima M."/>
            <person name="Kondo S."/>
            <person name="Konno H."/>
            <person name="Nakano K."/>
            <person name="Ninomiya N."/>
            <person name="Nishio T."/>
            <person name="Okada M."/>
            <person name="Plessy C."/>
            <person name="Shibata K."/>
            <person name="Shiraki T."/>
            <person name="Suzuki S."/>
            <person name="Tagami M."/>
            <person name="Waki K."/>
            <person name="Watahiki A."/>
            <person name="Okamura-Oho Y."/>
            <person name="Suzuki H."/>
            <person name="Kawai J."/>
            <person name="Hayashizaki Y."/>
        </authorList>
    </citation>
    <scope>NUCLEOTIDE SEQUENCE [LARGE SCALE MRNA] (ISOFORMS 1 AND 2)</scope>
    <source>
        <strain>C57BL/6J</strain>
    </source>
</reference>
<reference key="3">
    <citation type="journal article" date="2004" name="Genome Res.">
        <title>The status, quality, and expansion of the NIH full-length cDNA project: the Mammalian Gene Collection (MGC).</title>
        <authorList>
            <consortium name="The MGC Project Team"/>
        </authorList>
    </citation>
    <scope>NUCLEOTIDE SEQUENCE [LARGE SCALE MRNA] (ISOFORM 1)</scope>
    <source>
        <strain>129</strain>
        <strain>FVB/N</strain>
        <tissue>Mammary tumor</tissue>
        <tissue>Olfactory epithelium</tissue>
    </source>
</reference>
<reference key="4">
    <citation type="journal article" date="2003" name="J. Dermatol. Sci.">
        <title>Gene expression of Sh3d19, a novel adaptor protein with five Src homology 3 domains, in anagen mouse hair follicles.</title>
        <authorList>
            <person name="Shimomura Y."/>
            <person name="Aoki N."/>
            <person name="Ito K."/>
            <person name="Ito M."/>
        </authorList>
    </citation>
    <scope>INTERACTION WITH SH3D19</scope>
</reference>
<feature type="chain" id="PRO_0000341561" description="SH3 domain-containing YSC84-like protein 1">
    <location>
        <begin position="1"/>
        <end position="340"/>
    </location>
</feature>
<feature type="domain" description="SH3" evidence="1">
    <location>
        <begin position="281"/>
        <end position="340"/>
    </location>
</feature>
<feature type="region of interest" description="Disordered" evidence="2">
    <location>
        <begin position="226"/>
        <end position="259"/>
    </location>
</feature>
<feature type="compositionally biased region" description="Basic and acidic residues" evidence="2">
    <location>
        <begin position="226"/>
        <end position="237"/>
    </location>
</feature>
<feature type="compositionally biased region" description="Pro residues" evidence="2">
    <location>
        <begin position="238"/>
        <end position="249"/>
    </location>
</feature>
<feature type="splice variant" id="VSP_034336" description="In isoform 2." evidence="5">
    <original>AHVIAKAKGLAVLSVIKAGFLVTARGGSGIVLARLPDGK</original>
    <variation>E</variation>
    <location>
        <begin position="38"/>
        <end position="76"/>
    </location>
</feature>
<feature type="splice variant" id="VSP_034337" description="In isoform 3." evidence="6">
    <original>AKELPPKPSSRPQPAHPPVQLNAGSQGNRNEYKLYPELSSYHEKTGNLNQPIEVTALYSFEGQQPGDLNFQAGDRIIVISKTDSNFDWWEGKLRGQTGIFPANYVTMN</original>
    <variation>VLWPGFTSLSVNMRGSVLAQL</variation>
    <location>
        <begin position="233"/>
        <end position="340"/>
    </location>
</feature>
<feature type="sequence conflict" description="In Ref. 3; AAH61488." evidence="6" ref="3">
    <original>A</original>
    <variation>T</variation>
    <location>
        <position position="200"/>
    </location>
</feature>
<keyword id="KW-0025">Alternative splicing</keyword>
<keyword id="KW-1185">Reference proteome</keyword>
<keyword id="KW-0728">SH3 domain</keyword>
<evidence type="ECO:0000255" key="1">
    <source>
        <dbReference type="PROSITE-ProRule" id="PRU00192"/>
    </source>
</evidence>
<evidence type="ECO:0000256" key="2">
    <source>
        <dbReference type="SAM" id="MobiDB-lite"/>
    </source>
</evidence>
<evidence type="ECO:0000269" key="3">
    <source>
    </source>
</evidence>
<evidence type="ECO:0000269" key="4">
    <source>
    </source>
</evidence>
<evidence type="ECO:0000303" key="5">
    <source>
    </source>
</evidence>
<evidence type="ECO:0000305" key="6"/>
<protein>
    <recommendedName>
        <fullName>SH3 domain-containing YSC84-like protein 1</fullName>
    </recommendedName>
</protein>
<gene>
    <name type="primary">Sh3yl1</name>
</gene>
<sequence length="340" mass="37028">MNNPIPSNLKSEAKKAAKILREFTEITSRNGPDKIIPAHVIAKAKGLAVLSVIKAGFLVTARGGSGIVLARLPDGKWSAPSAIGIAGLGGGFEIGIEVSDLVIILNYDRAVEAFAKGGNLTLGGNFTVAVGPLGRNLEGNVSLRSSAAVFTYCKSRGLFAGISLEGSCLIERKETNRKFYCQDIRAYDILFGDVPQPAQAEDLYEILNSFTEKYETEGQRINLKKVAREQRKAKELPPKPSSRPQPAHPPVQLNAGSQGNRNEYKLYPELSSYHEKTGNLNQPIEVTALYSFEGQQPGDLNFQAGDRIIVISKTDSNFDWWEGKLRGQTGIFPANYVTMN</sequence>